<evidence type="ECO:0000250" key="1"/>
<evidence type="ECO:0000269" key="2">
    <source>
    </source>
</evidence>
<evidence type="ECO:0000269" key="3">
    <source>
    </source>
</evidence>
<evidence type="ECO:0000303" key="4">
    <source>
    </source>
</evidence>
<evidence type="ECO:0000305" key="5"/>
<evidence type="ECO:0000305" key="6">
    <source>
    </source>
</evidence>
<evidence type="ECO:0007744" key="7">
    <source>
        <dbReference type="PDB" id="6BQC"/>
    </source>
</evidence>
<evidence type="ECO:0007829" key="8">
    <source>
        <dbReference type="PDB" id="6BQC"/>
    </source>
</evidence>
<reference key="1">
    <citation type="journal article" date="1992" name="Biochemistry">
        <title>Cyclopropane fatty acid synthase of Escherichia coli: deduced amino acid sequence, purification, and studies of the enzyme active site.</title>
        <authorList>
            <person name="Wang A.-Y."/>
            <person name="Grogan D.W."/>
            <person name="Cronan J.E. Jr."/>
        </authorList>
    </citation>
    <scope>NUCLEOTIDE SEQUENCE [GENOMIC DNA]</scope>
    <scope>PROTEIN SEQUENCE OF 2-9</scope>
    <scope>ACTIVITY REGULATION</scope>
    <scope>CATALYTIC ACTIVITY</scope>
    <scope>ACTIVE SITE</scope>
    <source>
        <strain>K12</strain>
    </source>
</reference>
<reference key="2">
    <citation type="submission" date="1992-11" db="EMBL/GenBank/DDBJ databases">
        <authorList>
            <person name="Eberhardt S.M.R."/>
            <person name="Richter G."/>
            <person name="Gimbel W."/>
            <person name="Werner T."/>
            <person name="Bacher A."/>
        </authorList>
    </citation>
    <scope>NUCLEOTIDE SEQUENCE [GENOMIC DNA]</scope>
    <source>
        <strain>K12 / RR28</strain>
    </source>
</reference>
<reference key="3">
    <citation type="journal article" date="1996" name="DNA Res.">
        <title>A 570-kb DNA sequence of the Escherichia coli K-12 genome corresponding to the 28.0-40.1 min region on the linkage map.</title>
        <authorList>
            <person name="Aiba H."/>
            <person name="Baba T."/>
            <person name="Fujita K."/>
            <person name="Hayashi K."/>
            <person name="Inada T."/>
            <person name="Isono K."/>
            <person name="Itoh T."/>
            <person name="Kasai H."/>
            <person name="Kashimoto K."/>
            <person name="Kimura S."/>
            <person name="Kitakawa M."/>
            <person name="Kitagawa M."/>
            <person name="Makino K."/>
            <person name="Miki T."/>
            <person name="Mizobuchi K."/>
            <person name="Mori H."/>
            <person name="Mori T."/>
            <person name="Motomura K."/>
            <person name="Nakade S."/>
            <person name="Nakamura Y."/>
            <person name="Nashimoto H."/>
            <person name="Nishio Y."/>
            <person name="Oshima T."/>
            <person name="Saito N."/>
            <person name="Sampei G."/>
            <person name="Seki Y."/>
            <person name="Sivasundaram S."/>
            <person name="Tagami H."/>
            <person name="Takeda J."/>
            <person name="Takemoto K."/>
            <person name="Takeuchi Y."/>
            <person name="Wada C."/>
            <person name="Yamamoto Y."/>
            <person name="Horiuchi T."/>
        </authorList>
    </citation>
    <scope>NUCLEOTIDE SEQUENCE [LARGE SCALE GENOMIC DNA]</scope>
    <source>
        <strain>K12 / W3110 / ATCC 27325 / DSM 5911</strain>
    </source>
</reference>
<reference key="4">
    <citation type="journal article" date="1997" name="Science">
        <title>The complete genome sequence of Escherichia coli K-12.</title>
        <authorList>
            <person name="Blattner F.R."/>
            <person name="Plunkett G. III"/>
            <person name="Bloch C.A."/>
            <person name="Perna N.T."/>
            <person name="Burland V."/>
            <person name="Riley M."/>
            <person name="Collado-Vides J."/>
            <person name="Glasner J.D."/>
            <person name="Rode C.K."/>
            <person name="Mayhew G.F."/>
            <person name="Gregor J."/>
            <person name="Davis N.W."/>
            <person name="Kirkpatrick H.A."/>
            <person name="Goeden M.A."/>
            <person name="Rose D.J."/>
            <person name="Mau B."/>
            <person name="Shao Y."/>
        </authorList>
    </citation>
    <scope>NUCLEOTIDE SEQUENCE [LARGE SCALE GENOMIC DNA]</scope>
    <source>
        <strain>K12 / MG1655 / ATCC 47076</strain>
    </source>
</reference>
<reference key="5">
    <citation type="journal article" date="2006" name="Mol. Syst. Biol.">
        <title>Highly accurate genome sequences of Escherichia coli K-12 strains MG1655 and W3110.</title>
        <authorList>
            <person name="Hayashi K."/>
            <person name="Morooka N."/>
            <person name="Yamamoto Y."/>
            <person name="Fujita K."/>
            <person name="Isono K."/>
            <person name="Choi S."/>
            <person name="Ohtsubo E."/>
            <person name="Baba T."/>
            <person name="Wanner B.L."/>
            <person name="Mori H."/>
            <person name="Horiuchi T."/>
        </authorList>
    </citation>
    <scope>NUCLEOTIDE SEQUENCE [LARGE SCALE GENOMIC DNA]</scope>
    <source>
        <strain>K12 / W3110 / ATCC 27325 / DSM 5911</strain>
    </source>
</reference>
<reference evidence="7" key="6">
    <citation type="journal article" date="2018" name="Structure">
        <title>Structural and Functional Analysis of E.coli Cyclopropane Fatty Acid Synthase.</title>
        <authorList>
            <person name="Hari S.B."/>
            <person name="Grant R.A."/>
            <person name="Sauer R.T."/>
        </authorList>
    </citation>
    <scope>X-RAY CRYSTALLOGRAPHY (2.07 ANGSTROMS) OF 2-382</scope>
    <scope>SUBUNIT</scope>
    <scope>DOMAIN</scope>
    <scope>MUTAGENESIS OF GLU-308 AND TYR-317</scope>
    <scope>CATALYTIC ACTIVITY</scope>
</reference>
<gene>
    <name type="primary">cfa</name>
    <name type="synonym">cdfA</name>
    <name type="ordered locus">b1661</name>
    <name type="ordered locus">JW1653</name>
</gene>
<name>CFA_ECOLI</name>
<comment type="function">
    <text evidence="1">Transfers a methylene group from S-adenosyl-L-methionine to the cis double bond of an unsaturated fatty acid chain resulting in the replacement of the double bond with a methylene bridge.</text>
</comment>
<comment type="catalytic activity">
    <reaction evidence="2 3">
        <text>a 1-acyl-2-(9Z)-enoyl-sn-glycero-3-phospholipid + S-adenosyl-L-methionine = a 1-acyl-2-(9-cyclopronane)-acyl-sn-glycero-3-phospholipid + S-adenosyl-L-homocysteine + H(+)</text>
        <dbReference type="Rhea" id="RHEA:11988"/>
        <dbReference type="ChEBI" id="CHEBI:15378"/>
        <dbReference type="ChEBI" id="CHEBI:57856"/>
        <dbReference type="ChEBI" id="CHEBI:59789"/>
        <dbReference type="ChEBI" id="CHEBI:76593"/>
        <dbReference type="ChEBI" id="CHEBI:76594"/>
        <dbReference type="EC" id="2.1.1.79"/>
    </reaction>
</comment>
<comment type="activity regulation">
    <text evidence="2">Inhibited by sinefungin, A9145C and S-adenosyl-L-homocysteine.</text>
</comment>
<comment type="pathway">
    <text>Lipid metabolism; fatty acid biosynthesis.</text>
</comment>
<comment type="subunit">
    <text evidence="3">Homodimer (PubMed:30057024). Homodimerization is required for catalysis (PubMed:30057024). One subunit probably binds to the lipid bilayer and positions the other subunit for catalysis (PubMed:30057024).</text>
</comment>
<comment type="subcellular location">
    <subcellularLocation>
        <location>Cytoplasm</location>
    </subcellularLocation>
</comment>
<comment type="domain">
    <text evidence="3">Each of the subunit of the dimer contains a smaller N-domain that associates tightly with a larger catalytic C-domain.</text>
</comment>
<comment type="similarity">
    <text evidence="5">Belongs to the CFA/CMAS family.</text>
</comment>
<dbReference type="EC" id="2.1.1.79" evidence="2 3"/>
<dbReference type="EMBL" id="M98330">
    <property type="protein sequence ID" value="AAA23562.1"/>
    <property type="molecule type" value="Genomic_DNA"/>
</dbReference>
<dbReference type="EMBL" id="X69109">
    <property type="status" value="NOT_ANNOTATED_CDS"/>
    <property type="molecule type" value="Genomic_DNA"/>
</dbReference>
<dbReference type="EMBL" id="U00096">
    <property type="protein sequence ID" value="AAC74733.1"/>
    <property type="molecule type" value="Genomic_DNA"/>
</dbReference>
<dbReference type="EMBL" id="AP009048">
    <property type="protein sequence ID" value="BAA15428.1"/>
    <property type="molecule type" value="Genomic_DNA"/>
</dbReference>
<dbReference type="PIR" id="A44292">
    <property type="entry name" value="A44292"/>
</dbReference>
<dbReference type="RefSeq" id="NP_416178.1">
    <property type="nucleotide sequence ID" value="NC_000913.3"/>
</dbReference>
<dbReference type="RefSeq" id="WP_000098896.1">
    <property type="nucleotide sequence ID" value="NZ_SSZK01000001.1"/>
</dbReference>
<dbReference type="PDB" id="6BQC">
    <property type="method" value="X-ray"/>
    <property type="resolution" value="2.07 A"/>
    <property type="chains" value="A=2-382"/>
</dbReference>
<dbReference type="PDBsum" id="6BQC"/>
<dbReference type="SMR" id="P0A9H7"/>
<dbReference type="BioGRID" id="4263376">
    <property type="interactions" value="308"/>
</dbReference>
<dbReference type="DIP" id="DIP-48026N"/>
<dbReference type="FunCoup" id="P0A9H7">
    <property type="interactions" value="454"/>
</dbReference>
<dbReference type="IntAct" id="P0A9H7">
    <property type="interactions" value="4"/>
</dbReference>
<dbReference type="STRING" id="511145.b1661"/>
<dbReference type="jPOST" id="P0A9H7"/>
<dbReference type="PaxDb" id="511145-b1661"/>
<dbReference type="EnsemblBacteria" id="AAC74733">
    <property type="protein sequence ID" value="AAC74733"/>
    <property type="gene ID" value="b1661"/>
</dbReference>
<dbReference type="GeneID" id="93775816"/>
<dbReference type="GeneID" id="944811"/>
<dbReference type="KEGG" id="ecj:JW1653"/>
<dbReference type="KEGG" id="eco:b1661"/>
<dbReference type="KEGG" id="ecoc:C3026_09530"/>
<dbReference type="PATRIC" id="fig|1411691.4.peg.596"/>
<dbReference type="EchoBASE" id="EB1493"/>
<dbReference type="eggNOG" id="COG2230">
    <property type="taxonomic scope" value="Bacteria"/>
</dbReference>
<dbReference type="HOGENOM" id="CLU_026434_6_0_6"/>
<dbReference type="InParanoid" id="P0A9H7"/>
<dbReference type="OMA" id="WGGLAEF"/>
<dbReference type="OrthoDB" id="9782855at2"/>
<dbReference type="PhylomeDB" id="P0A9H7"/>
<dbReference type="BioCyc" id="EcoCyc:CFA-MONOMER"/>
<dbReference type="BioCyc" id="MetaCyc:CFA-MONOMER"/>
<dbReference type="BRENDA" id="2.1.1.79">
    <property type="organism ID" value="2026"/>
</dbReference>
<dbReference type="SABIO-RK" id="P0A9H7"/>
<dbReference type="UniPathway" id="UPA00094"/>
<dbReference type="PRO" id="PR:P0A9H7"/>
<dbReference type="Proteomes" id="UP000000625">
    <property type="component" value="Chromosome"/>
</dbReference>
<dbReference type="GO" id="GO:0005829">
    <property type="term" value="C:cytosol"/>
    <property type="evidence" value="ECO:0000314"/>
    <property type="project" value="EcoCyc"/>
</dbReference>
<dbReference type="GO" id="GO:0031234">
    <property type="term" value="C:extrinsic component of cytoplasmic side of plasma membrane"/>
    <property type="evidence" value="ECO:0000305"/>
    <property type="project" value="EcoCyc"/>
</dbReference>
<dbReference type="GO" id="GO:0071890">
    <property type="term" value="F:bicarbonate binding"/>
    <property type="evidence" value="ECO:0000314"/>
    <property type="project" value="EcoCyc"/>
</dbReference>
<dbReference type="GO" id="GO:0008825">
    <property type="term" value="F:cyclopropane-fatty-acyl-phospholipid synthase activity"/>
    <property type="evidence" value="ECO:0000314"/>
    <property type="project" value="EcoCyc"/>
</dbReference>
<dbReference type="GO" id="GO:0042803">
    <property type="term" value="F:protein homodimerization activity"/>
    <property type="evidence" value="ECO:0000314"/>
    <property type="project" value="EcoCyc"/>
</dbReference>
<dbReference type="GO" id="GO:0006633">
    <property type="term" value="P:fatty acid biosynthetic process"/>
    <property type="evidence" value="ECO:0007669"/>
    <property type="project" value="UniProtKB-UniPathway"/>
</dbReference>
<dbReference type="GO" id="GO:0008610">
    <property type="term" value="P:lipid biosynthetic process"/>
    <property type="evidence" value="ECO:0000318"/>
    <property type="project" value="GO_Central"/>
</dbReference>
<dbReference type="GO" id="GO:0030258">
    <property type="term" value="P:lipid modification"/>
    <property type="evidence" value="ECO:0000314"/>
    <property type="project" value="EcoCyc"/>
</dbReference>
<dbReference type="GO" id="GO:0032259">
    <property type="term" value="P:methylation"/>
    <property type="evidence" value="ECO:0007669"/>
    <property type="project" value="UniProtKB-KW"/>
</dbReference>
<dbReference type="CDD" id="cd02440">
    <property type="entry name" value="AdoMet_MTases"/>
    <property type="match status" value="1"/>
</dbReference>
<dbReference type="FunFam" id="3.40.50.150:FF:000074">
    <property type="entry name" value="Cyclopropane-fatty-acyl-phospholipid synthase family protein"/>
    <property type="match status" value="1"/>
</dbReference>
<dbReference type="Gene3D" id="3.40.50.150">
    <property type="entry name" value="Vaccinia Virus protein VP39"/>
    <property type="match status" value="1"/>
</dbReference>
<dbReference type="InterPro" id="IPR050723">
    <property type="entry name" value="CFA/CMAS"/>
</dbReference>
<dbReference type="InterPro" id="IPR003333">
    <property type="entry name" value="CMAS"/>
</dbReference>
<dbReference type="InterPro" id="IPR029063">
    <property type="entry name" value="SAM-dependent_MTases_sf"/>
</dbReference>
<dbReference type="NCBIfam" id="NF008686">
    <property type="entry name" value="PRK11705.1"/>
    <property type="match status" value="1"/>
</dbReference>
<dbReference type="PANTHER" id="PTHR43667">
    <property type="entry name" value="CYCLOPROPANE-FATTY-ACYL-PHOSPHOLIPID SYNTHASE"/>
    <property type="match status" value="1"/>
</dbReference>
<dbReference type="PANTHER" id="PTHR43667:SF1">
    <property type="entry name" value="CYCLOPROPANE-FATTY-ACYL-PHOSPHOLIPID SYNTHASE"/>
    <property type="match status" value="1"/>
</dbReference>
<dbReference type="Pfam" id="PF02353">
    <property type="entry name" value="CMAS"/>
    <property type="match status" value="1"/>
</dbReference>
<dbReference type="PIRSF" id="PIRSF003085">
    <property type="entry name" value="CMAS"/>
    <property type="match status" value="1"/>
</dbReference>
<dbReference type="SUPFAM" id="SSF53335">
    <property type="entry name" value="S-adenosyl-L-methionine-dependent methyltransferases"/>
    <property type="match status" value="1"/>
</dbReference>
<keyword id="KW-0002">3D-structure</keyword>
<keyword id="KW-0963">Cytoplasm</keyword>
<keyword id="KW-0903">Direct protein sequencing</keyword>
<keyword id="KW-0444">Lipid biosynthesis</keyword>
<keyword id="KW-0443">Lipid metabolism</keyword>
<keyword id="KW-0489">Methyltransferase</keyword>
<keyword id="KW-1185">Reference proteome</keyword>
<keyword id="KW-0949">S-adenosyl-L-methionine</keyword>
<keyword id="KW-0808">Transferase</keyword>
<accession>P0A9H7</accession>
<accession>P30010</accession>
<proteinExistence type="evidence at protein level"/>
<feature type="initiator methionine" description="Removed" evidence="2">
    <location>
        <position position="1"/>
    </location>
</feature>
<feature type="chain" id="PRO_0000089572" description="Cyclopropane-fatty-acyl-phospholipid synthase">
    <location>
        <begin position="2"/>
        <end position="382"/>
    </location>
</feature>
<feature type="active site" evidence="6">
    <location>
        <position position="354"/>
    </location>
</feature>
<feature type="binding site" evidence="1">
    <location>
        <begin position="137"/>
        <end position="138"/>
    </location>
    <ligand>
        <name>S-adenosyl-L-methionine</name>
        <dbReference type="ChEBI" id="CHEBI:59789"/>
    </ligand>
</feature>
<feature type="binding site" evidence="6">
    <location>
        <begin position="171"/>
        <end position="179"/>
    </location>
    <ligand>
        <name>S-adenosyl-L-methionine</name>
        <dbReference type="ChEBI" id="CHEBI:59789"/>
    </ligand>
</feature>
<feature type="binding site" evidence="1">
    <location>
        <begin position="197"/>
        <end position="202"/>
    </location>
    <ligand>
        <name>S-adenosyl-L-methionine</name>
        <dbReference type="ChEBI" id="CHEBI:59789"/>
    </ligand>
</feature>
<feature type="mutagenesis site" description="Loss of dimerization and catalytic activity." evidence="3">
    <original>E</original>
    <variation>Q</variation>
    <location>
        <position position="308"/>
    </location>
</feature>
<feature type="mutagenesis site" description="Complete loss of catalytic activity." evidence="3">
    <original>Y</original>
    <variation>F</variation>
    <location>
        <position position="317"/>
    </location>
</feature>
<feature type="sequence conflict" description="In Ref. 2; X69109." evidence="5" ref="2">
    <original>S</original>
    <variation>R</variation>
    <location>
        <position position="2"/>
    </location>
</feature>
<feature type="sequence conflict" description="In Ref. 2; X69109." evidence="5" ref="2">
    <original>E</original>
    <variation>G</variation>
    <location>
        <position position="8"/>
    </location>
</feature>
<feature type="sequence conflict" description="In Ref. 2; X69109." evidence="5" ref="2">
    <original>S</original>
    <variation>N</variation>
    <location>
        <position position="25"/>
    </location>
</feature>
<feature type="sequence conflict" description="In Ref. 2; X69109." evidence="5" ref="2">
    <original>I</original>
    <variation>T</variation>
    <location>
        <position position="39"/>
    </location>
</feature>
<feature type="helix" evidence="8">
    <location>
        <begin position="15"/>
        <end position="26"/>
    </location>
</feature>
<feature type="strand" evidence="8">
    <location>
        <begin position="39"/>
        <end position="42"/>
    </location>
</feature>
<feature type="helix" evidence="8">
    <location>
        <begin position="46"/>
        <end position="63"/>
    </location>
</feature>
<feature type="strand" evidence="8">
    <location>
        <begin position="66"/>
        <end position="70"/>
    </location>
</feature>
<feature type="helix" evidence="8">
    <location>
        <begin position="72"/>
        <end position="81"/>
    </location>
</feature>
<feature type="helix" evidence="8">
    <location>
        <begin position="84"/>
        <end position="87"/>
    </location>
</feature>
<feature type="helix" evidence="8">
    <location>
        <begin position="90"/>
        <end position="98"/>
    </location>
</feature>
<feature type="helix" evidence="8">
    <location>
        <begin position="124"/>
        <end position="130"/>
    </location>
</feature>
<feature type="helix" evidence="8">
    <location>
        <begin position="148"/>
        <end position="163"/>
    </location>
</feature>
<feature type="strand" evidence="8">
    <location>
        <begin position="170"/>
        <end position="175"/>
    </location>
</feature>
<feature type="helix" evidence="8">
    <location>
        <begin position="180"/>
        <end position="188"/>
    </location>
</feature>
<feature type="strand" evidence="8">
    <location>
        <begin position="192"/>
        <end position="198"/>
    </location>
</feature>
<feature type="helix" evidence="8">
    <location>
        <begin position="200"/>
        <end position="209"/>
    </location>
</feature>
<feature type="turn" evidence="8">
    <location>
        <begin position="210"/>
        <end position="212"/>
    </location>
</feature>
<feature type="strand" evidence="8">
    <location>
        <begin position="213"/>
        <end position="220"/>
    </location>
</feature>
<feature type="helix" evidence="8">
    <location>
        <begin position="222"/>
        <end position="224"/>
    </location>
</feature>
<feature type="strand" evidence="8">
    <location>
        <begin position="229"/>
        <end position="236"/>
    </location>
</feature>
<feature type="helix" evidence="8">
    <location>
        <begin position="238"/>
        <end position="240"/>
    </location>
</feature>
<feature type="helix" evidence="8">
    <location>
        <begin position="243"/>
        <end position="245"/>
    </location>
</feature>
<feature type="helix" evidence="8">
    <location>
        <begin position="246"/>
        <end position="256"/>
    </location>
</feature>
<feature type="strand" evidence="8">
    <location>
        <begin position="257"/>
        <end position="274"/>
    </location>
</feature>
<feature type="helix" evidence="8">
    <location>
        <begin position="279"/>
        <end position="284"/>
    </location>
</feature>
<feature type="helix" evidence="8">
    <location>
        <begin position="294"/>
        <end position="301"/>
    </location>
</feature>
<feature type="turn" evidence="8">
    <location>
        <begin position="302"/>
        <end position="304"/>
    </location>
</feature>
<feature type="strand" evidence="8">
    <location>
        <begin position="306"/>
        <end position="312"/>
    </location>
</feature>
<feature type="helix" evidence="8">
    <location>
        <begin position="314"/>
        <end position="335"/>
    </location>
</feature>
<feature type="helix" evidence="8">
    <location>
        <begin position="336"/>
        <end position="338"/>
    </location>
</feature>
<feature type="helix" evidence="8">
    <location>
        <begin position="341"/>
        <end position="359"/>
    </location>
</feature>
<feature type="strand" evidence="8">
    <location>
        <begin position="362"/>
        <end position="372"/>
    </location>
</feature>
<protein>
    <recommendedName>
        <fullName evidence="4">Cyclopropane-fatty-acyl-phospholipid synthase</fullName>
        <shortName evidence="4">CFA synthase</shortName>
        <shortName>Cyclopropane fatty acid synthase</shortName>
        <ecNumber evidence="2 3">2.1.1.79</ecNumber>
    </recommendedName>
</protein>
<sequence length="382" mass="43909">MSSSCIEEVSVPDDNWYRIANELLSRAGIAINGSAPADIRVKNPDFFKRVLQEGSLGLGESYMDGWWECDRLDMFFSKVLRAGLENQLPHHFKDTLRIAGARLFNLQSKKRAWIVGKEHYDLGNDLFSRMLDPFMQYSCAYWKDADNLESAQQAKLKMICEKLQLKPGMRVLDIGCGWGGLAHYMASNYDVSVVGVTISAEQQKMAQERCEGLDVTILLQDYRDLNDQFDRIVSVGMFEHVGPKNYDTYFAVVDRNLKPEGIFLLHTIGSKKTDLNVDPWINKYIFPNGCLPSVRQIAQSSEPHFVMEDWHNFGADYDTTLMAWYERFLAAWPEIADNYSERFKRMFTYYLNACAGAFRARDIQLWQVVFSRGVENGLRVAR</sequence>
<organism>
    <name type="scientific">Escherichia coli (strain K12)</name>
    <dbReference type="NCBI Taxonomy" id="83333"/>
    <lineage>
        <taxon>Bacteria</taxon>
        <taxon>Pseudomonadati</taxon>
        <taxon>Pseudomonadota</taxon>
        <taxon>Gammaproteobacteria</taxon>
        <taxon>Enterobacterales</taxon>
        <taxon>Enterobacteriaceae</taxon>
        <taxon>Escherichia</taxon>
    </lineage>
</organism>